<organism>
    <name type="scientific">Shewanella loihica (strain ATCC BAA-1088 / PV-4)</name>
    <dbReference type="NCBI Taxonomy" id="323850"/>
    <lineage>
        <taxon>Bacteria</taxon>
        <taxon>Pseudomonadati</taxon>
        <taxon>Pseudomonadota</taxon>
        <taxon>Gammaproteobacteria</taxon>
        <taxon>Alteromonadales</taxon>
        <taxon>Shewanellaceae</taxon>
        <taxon>Shewanella</taxon>
    </lineage>
</organism>
<comment type="function">
    <text evidence="1">Plays an essential role in the initiation and regulation of chromosomal replication. ATP-DnaA binds to the origin of replication (oriC) to initiate formation of the DNA replication initiation complex once per cell cycle. Binds the DnaA box (a 9 base pair repeat at the origin) and separates the double-stranded (ds)DNA. Forms a right-handed helical filament on oriC DNA; dsDNA binds to the exterior of the filament while single-stranded (ss)DNA is stabiized in the filament's interior. The ATP-DnaA-oriC complex binds and stabilizes one strand of the AT-rich DNA unwinding element (DUE), permitting loading of DNA polymerase. After initiation quickly degrades to an ADP-DnaA complex that is not apt for DNA replication. Binds acidic phospholipids.</text>
</comment>
<comment type="subunit">
    <text evidence="1">Oligomerizes as a right-handed, spiral filament on DNA at oriC.</text>
</comment>
<comment type="subcellular location">
    <subcellularLocation>
        <location evidence="1">Cytoplasm</location>
    </subcellularLocation>
</comment>
<comment type="domain">
    <text evidence="1">Domain I is involved in oligomerization and binding regulators, domain II is flexibile and of varying length in different bacteria, domain III forms the AAA+ region, while domain IV binds dsDNA.</text>
</comment>
<comment type="similarity">
    <text evidence="1">Belongs to the DnaA family.</text>
</comment>
<evidence type="ECO:0000255" key="1">
    <source>
        <dbReference type="HAMAP-Rule" id="MF_00377"/>
    </source>
</evidence>
<evidence type="ECO:0000256" key="2">
    <source>
        <dbReference type="SAM" id="MobiDB-lite"/>
    </source>
</evidence>
<gene>
    <name evidence="1" type="primary">dnaA</name>
    <name type="ordered locus">Shew_0001</name>
</gene>
<proteinExistence type="inferred from homology"/>
<sequence>MAVSLWQQCIGRLQDELSAQQFSMWIRPLQAEMDGETLVLYAPNRFVLDWVRDKYLNTINQFFTEQMGSDAPKLRFDIGSRPASKPAAPAASTKSPVAPAAKSPSKPSFNSNEPAATANHRSNMNPTYQFDNFVEGKSNQLGKAAALQVSENPGGAYNPLFLYGGTGLGKTHLLHAVGNGIIKNNPNAKVVYMHSERFVQDMVKALQNNAIEEFKRYYRSVDALFIDDIQFFANKDRSQEEFFHTFNALLEGNHQVILTSDRYPKEIDGVEDRLKSRFGWGLTVAIEPPELETRVAILMRKAQESGINLPDEVAFFIAKRLRSNVRELEGALNRVIANANFTGRPITIDFVREALRDLLALQEKLVTIDNIQKTVAEYYKIKMADMLSKRRSRSVARPRQMAMALSKELTNQSLPEIGDAFGGRDHTTVLHACRKIAQLREESHDIKEDYANLIRTLSS</sequence>
<reference key="1">
    <citation type="submission" date="2007-03" db="EMBL/GenBank/DDBJ databases">
        <title>Complete sequence of Shewanella loihica PV-4.</title>
        <authorList>
            <consortium name="US DOE Joint Genome Institute"/>
            <person name="Copeland A."/>
            <person name="Lucas S."/>
            <person name="Lapidus A."/>
            <person name="Barry K."/>
            <person name="Detter J.C."/>
            <person name="Glavina del Rio T."/>
            <person name="Hammon N."/>
            <person name="Israni S."/>
            <person name="Dalin E."/>
            <person name="Tice H."/>
            <person name="Pitluck S."/>
            <person name="Chain P."/>
            <person name="Malfatti S."/>
            <person name="Shin M."/>
            <person name="Vergez L."/>
            <person name="Schmutz J."/>
            <person name="Larimer F."/>
            <person name="Land M."/>
            <person name="Hauser L."/>
            <person name="Kyrpides N."/>
            <person name="Mikhailova N."/>
            <person name="Romine M.F."/>
            <person name="Serres G."/>
            <person name="Fredrickson J."/>
            <person name="Tiedje J."/>
            <person name="Richardson P."/>
        </authorList>
    </citation>
    <scope>NUCLEOTIDE SEQUENCE [LARGE SCALE GENOMIC DNA]</scope>
    <source>
        <strain>ATCC BAA-1088 / PV-4</strain>
    </source>
</reference>
<feature type="chain" id="PRO_1000048720" description="Chromosomal replication initiator protein DnaA">
    <location>
        <begin position="1"/>
        <end position="459"/>
    </location>
</feature>
<feature type="region of interest" description="Domain I, interacts with DnaA modulators" evidence="1">
    <location>
        <begin position="1"/>
        <end position="90"/>
    </location>
</feature>
<feature type="region of interest" description="Disordered" evidence="2">
    <location>
        <begin position="75"/>
        <end position="124"/>
    </location>
</feature>
<feature type="region of interest" description="Domain II" evidence="1">
    <location>
        <begin position="91"/>
        <end position="122"/>
    </location>
</feature>
<feature type="region of interest" description="Domain III, AAA+ region" evidence="1">
    <location>
        <begin position="123"/>
        <end position="339"/>
    </location>
</feature>
<feature type="region of interest" description="Domain IV, binds dsDNA" evidence="1">
    <location>
        <begin position="340"/>
        <end position="459"/>
    </location>
</feature>
<feature type="compositionally biased region" description="Low complexity" evidence="2">
    <location>
        <begin position="80"/>
        <end position="108"/>
    </location>
</feature>
<feature type="compositionally biased region" description="Polar residues" evidence="2">
    <location>
        <begin position="109"/>
        <end position="124"/>
    </location>
</feature>
<feature type="binding site" evidence="1">
    <location>
        <position position="167"/>
    </location>
    <ligand>
        <name>ATP</name>
        <dbReference type="ChEBI" id="CHEBI:30616"/>
    </ligand>
</feature>
<feature type="binding site" evidence="1">
    <location>
        <position position="169"/>
    </location>
    <ligand>
        <name>ATP</name>
        <dbReference type="ChEBI" id="CHEBI:30616"/>
    </ligand>
</feature>
<feature type="binding site" evidence="1">
    <location>
        <position position="170"/>
    </location>
    <ligand>
        <name>ATP</name>
        <dbReference type="ChEBI" id="CHEBI:30616"/>
    </ligand>
</feature>
<feature type="binding site" evidence="1">
    <location>
        <position position="171"/>
    </location>
    <ligand>
        <name>ATP</name>
        <dbReference type="ChEBI" id="CHEBI:30616"/>
    </ligand>
</feature>
<accession>A3Q8S6</accession>
<dbReference type="EMBL" id="CP000606">
    <property type="protein sequence ID" value="ABO21874.1"/>
    <property type="molecule type" value="Genomic_DNA"/>
</dbReference>
<dbReference type="RefSeq" id="WP_011863811.1">
    <property type="nucleotide sequence ID" value="NC_009092.1"/>
</dbReference>
<dbReference type="SMR" id="A3Q8S6"/>
<dbReference type="STRING" id="323850.Shew_0001"/>
<dbReference type="KEGG" id="slo:Shew_0001"/>
<dbReference type="eggNOG" id="COG0593">
    <property type="taxonomic scope" value="Bacteria"/>
</dbReference>
<dbReference type="HOGENOM" id="CLU_026910_0_1_6"/>
<dbReference type="OrthoDB" id="9807019at2"/>
<dbReference type="Proteomes" id="UP000001558">
    <property type="component" value="Chromosome"/>
</dbReference>
<dbReference type="GO" id="GO:0005737">
    <property type="term" value="C:cytoplasm"/>
    <property type="evidence" value="ECO:0007669"/>
    <property type="project" value="UniProtKB-SubCell"/>
</dbReference>
<dbReference type="GO" id="GO:0005886">
    <property type="term" value="C:plasma membrane"/>
    <property type="evidence" value="ECO:0007669"/>
    <property type="project" value="TreeGrafter"/>
</dbReference>
<dbReference type="GO" id="GO:0005524">
    <property type="term" value="F:ATP binding"/>
    <property type="evidence" value="ECO:0007669"/>
    <property type="project" value="UniProtKB-UniRule"/>
</dbReference>
<dbReference type="GO" id="GO:0016887">
    <property type="term" value="F:ATP hydrolysis activity"/>
    <property type="evidence" value="ECO:0007669"/>
    <property type="project" value="InterPro"/>
</dbReference>
<dbReference type="GO" id="GO:0003688">
    <property type="term" value="F:DNA replication origin binding"/>
    <property type="evidence" value="ECO:0007669"/>
    <property type="project" value="UniProtKB-UniRule"/>
</dbReference>
<dbReference type="GO" id="GO:0008289">
    <property type="term" value="F:lipid binding"/>
    <property type="evidence" value="ECO:0007669"/>
    <property type="project" value="UniProtKB-KW"/>
</dbReference>
<dbReference type="GO" id="GO:0006270">
    <property type="term" value="P:DNA replication initiation"/>
    <property type="evidence" value="ECO:0007669"/>
    <property type="project" value="UniProtKB-UniRule"/>
</dbReference>
<dbReference type="GO" id="GO:0006275">
    <property type="term" value="P:regulation of DNA replication"/>
    <property type="evidence" value="ECO:0007669"/>
    <property type="project" value="UniProtKB-UniRule"/>
</dbReference>
<dbReference type="CDD" id="cd00009">
    <property type="entry name" value="AAA"/>
    <property type="match status" value="1"/>
</dbReference>
<dbReference type="CDD" id="cd06571">
    <property type="entry name" value="Bac_DnaA_C"/>
    <property type="match status" value="1"/>
</dbReference>
<dbReference type="FunFam" id="1.10.1750.10:FF:000001">
    <property type="entry name" value="Chromosomal replication initiator protein DnaA"/>
    <property type="match status" value="1"/>
</dbReference>
<dbReference type="FunFam" id="1.10.8.60:FF:000003">
    <property type="entry name" value="Chromosomal replication initiator protein DnaA"/>
    <property type="match status" value="1"/>
</dbReference>
<dbReference type="FunFam" id="3.30.300.180:FF:000001">
    <property type="entry name" value="Chromosomal replication initiator protein DnaA"/>
    <property type="match status" value="1"/>
</dbReference>
<dbReference type="FunFam" id="3.40.50.300:FF:000103">
    <property type="entry name" value="Chromosomal replication initiator protein DnaA"/>
    <property type="match status" value="1"/>
</dbReference>
<dbReference type="Gene3D" id="1.10.1750.10">
    <property type="match status" value="1"/>
</dbReference>
<dbReference type="Gene3D" id="1.10.8.60">
    <property type="match status" value="1"/>
</dbReference>
<dbReference type="Gene3D" id="3.30.300.180">
    <property type="match status" value="1"/>
</dbReference>
<dbReference type="Gene3D" id="3.40.50.300">
    <property type="entry name" value="P-loop containing nucleotide triphosphate hydrolases"/>
    <property type="match status" value="1"/>
</dbReference>
<dbReference type="HAMAP" id="MF_00377">
    <property type="entry name" value="DnaA_bact"/>
    <property type="match status" value="1"/>
</dbReference>
<dbReference type="InterPro" id="IPR003593">
    <property type="entry name" value="AAA+_ATPase"/>
</dbReference>
<dbReference type="InterPro" id="IPR001957">
    <property type="entry name" value="Chromosome_initiator_DnaA"/>
</dbReference>
<dbReference type="InterPro" id="IPR020591">
    <property type="entry name" value="Chromosome_initiator_DnaA-like"/>
</dbReference>
<dbReference type="InterPro" id="IPR018312">
    <property type="entry name" value="Chromosome_initiator_DnaA_CS"/>
</dbReference>
<dbReference type="InterPro" id="IPR013159">
    <property type="entry name" value="DnaA_C"/>
</dbReference>
<dbReference type="InterPro" id="IPR013317">
    <property type="entry name" value="DnaA_dom"/>
</dbReference>
<dbReference type="InterPro" id="IPR024633">
    <property type="entry name" value="DnaA_N_dom"/>
</dbReference>
<dbReference type="InterPro" id="IPR038454">
    <property type="entry name" value="DnaA_N_sf"/>
</dbReference>
<dbReference type="InterPro" id="IPR055199">
    <property type="entry name" value="Hda_lid"/>
</dbReference>
<dbReference type="InterPro" id="IPR027417">
    <property type="entry name" value="P-loop_NTPase"/>
</dbReference>
<dbReference type="InterPro" id="IPR010921">
    <property type="entry name" value="Trp_repressor/repl_initiator"/>
</dbReference>
<dbReference type="NCBIfam" id="TIGR00362">
    <property type="entry name" value="DnaA"/>
    <property type="match status" value="1"/>
</dbReference>
<dbReference type="PANTHER" id="PTHR30050">
    <property type="entry name" value="CHROMOSOMAL REPLICATION INITIATOR PROTEIN DNAA"/>
    <property type="match status" value="1"/>
</dbReference>
<dbReference type="PANTHER" id="PTHR30050:SF2">
    <property type="entry name" value="CHROMOSOMAL REPLICATION INITIATOR PROTEIN DNAA"/>
    <property type="match status" value="1"/>
</dbReference>
<dbReference type="Pfam" id="PF00308">
    <property type="entry name" value="Bac_DnaA"/>
    <property type="match status" value="1"/>
</dbReference>
<dbReference type="Pfam" id="PF08299">
    <property type="entry name" value="Bac_DnaA_C"/>
    <property type="match status" value="1"/>
</dbReference>
<dbReference type="Pfam" id="PF11638">
    <property type="entry name" value="DnaA_N"/>
    <property type="match status" value="1"/>
</dbReference>
<dbReference type="Pfam" id="PF22688">
    <property type="entry name" value="Hda_lid"/>
    <property type="match status" value="1"/>
</dbReference>
<dbReference type="PRINTS" id="PR00051">
    <property type="entry name" value="DNAA"/>
</dbReference>
<dbReference type="SMART" id="SM00382">
    <property type="entry name" value="AAA"/>
    <property type="match status" value="1"/>
</dbReference>
<dbReference type="SMART" id="SM00760">
    <property type="entry name" value="Bac_DnaA_C"/>
    <property type="match status" value="1"/>
</dbReference>
<dbReference type="SUPFAM" id="SSF52540">
    <property type="entry name" value="P-loop containing nucleoside triphosphate hydrolases"/>
    <property type="match status" value="1"/>
</dbReference>
<dbReference type="SUPFAM" id="SSF48295">
    <property type="entry name" value="TrpR-like"/>
    <property type="match status" value="1"/>
</dbReference>
<dbReference type="PROSITE" id="PS01008">
    <property type="entry name" value="DNAA"/>
    <property type="match status" value="1"/>
</dbReference>
<protein>
    <recommendedName>
        <fullName evidence="1">Chromosomal replication initiator protein DnaA</fullName>
    </recommendedName>
</protein>
<name>DNAA_SHELP</name>
<keyword id="KW-0067">ATP-binding</keyword>
<keyword id="KW-0963">Cytoplasm</keyword>
<keyword id="KW-0235">DNA replication</keyword>
<keyword id="KW-0238">DNA-binding</keyword>
<keyword id="KW-0446">Lipid-binding</keyword>
<keyword id="KW-0547">Nucleotide-binding</keyword>
<keyword id="KW-1185">Reference proteome</keyword>